<keyword id="KW-1185">Reference proteome</keyword>
<protein>
    <recommendedName>
        <fullName>Uncharacterized protein MJ0433</fullName>
    </recommendedName>
</protein>
<name>Y433_METJA</name>
<organism>
    <name type="scientific">Methanocaldococcus jannaschii (strain ATCC 43067 / DSM 2661 / JAL-1 / JCM 10045 / NBRC 100440)</name>
    <name type="common">Methanococcus jannaschii</name>
    <dbReference type="NCBI Taxonomy" id="243232"/>
    <lineage>
        <taxon>Archaea</taxon>
        <taxon>Methanobacteriati</taxon>
        <taxon>Methanobacteriota</taxon>
        <taxon>Methanomada group</taxon>
        <taxon>Methanococci</taxon>
        <taxon>Methanococcales</taxon>
        <taxon>Methanocaldococcaceae</taxon>
        <taxon>Methanocaldococcus</taxon>
    </lineage>
</organism>
<proteinExistence type="predicted"/>
<accession>Q57875</accession>
<gene>
    <name type="ordered locus">MJ0433</name>
</gene>
<reference key="1">
    <citation type="journal article" date="1996" name="Science">
        <title>Complete genome sequence of the methanogenic archaeon, Methanococcus jannaschii.</title>
        <authorList>
            <person name="Bult C.J."/>
            <person name="White O."/>
            <person name="Olsen G.J."/>
            <person name="Zhou L."/>
            <person name="Fleischmann R.D."/>
            <person name="Sutton G.G."/>
            <person name="Blake J.A."/>
            <person name="FitzGerald L.M."/>
            <person name="Clayton R.A."/>
            <person name="Gocayne J.D."/>
            <person name="Kerlavage A.R."/>
            <person name="Dougherty B.A."/>
            <person name="Tomb J.-F."/>
            <person name="Adams M.D."/>
            <person name="Reich C.I."/>
            <person name="Overbeek R."/>
            <person name="Kirkness E.F."/>
            <person name="Weinstock K.G."/>
            <person name="Merrick J.M."/>
            <person name="Glodek A."/>
            <person name="Scott J.L."/>
            <person name="Geoghagen N.S.M."/>
            <person name="Weidman J.F."/>
            <person name="Fuhrmann J.L."/>
            <person name="Nguyen D."/>
            <person name="Utterback T.R."/>
            <person name="Kelley J.M."/>
            <person name="Peterson J.D."/>
            <person name="Sadow P.W."/>
            <person name="Hanna M.C."/>
            <person name="Cotton M.D."/>
            <person name="Roberts K.M."/>
            <person name="Hurst M.A."/>
            <person name="Kaine B.P."/>
            <person name="Borodovsky M."/>
            <person name="Klenk H.-P."/>
            <person name="Fraser C.M."/>
            <person name="Smith H.O."/>
            <person name="Woese C.R."/>
            <person name="Venter J.C."/>
        </authorList>
    </citation>
    <scope>NUCLEOTIDE SEQUENCE [LARGE SCALE GENOMIC DNA]</scope>
    <source>
        <strain>ATCC 43067 / DSM 2661 / JAL-1 / JCM 10045 / NBRC 100440</strain>
    </source>
</reference>
<sequence length="175" mass="20494">MDAKEILELVEESYKSEDGDYKNKVYFISYFLSSLIFVLIHISIKYWNFNILFIVSLLLIIGSILIVRQQKLYKKTRCYFDKIFEKIVKYGMIAVVLSSVITLYTYPRISGVAIAGIFGFLLVIDGILFKSKKRKFLGLLMMFSSIPMFIFHEYQFLIFAFVQFLVALCFLICKE</sequence>
<feature type="chain" id="PRO_0000106874" description="Uncharacterized protein MJ0433">
    <location>
        <begin position="1"/>
        <end position="175"/>
    </location>
</feature>
<dbReference type="EMBL" id="L77117">
    <property type="protein sequence ID" value="AAB98433.1"/>
    <property type="molecule type" value="Genomic_DNA"/>
</dbReference>
<dbReference type="PIR" id="A64354">
    <property type="entry name" value="A64354"/>
</dbReference>
<dbReference type="RefSeq" id="WP_010869932.1">
    <property type="nucleotide sequence ID" value="NC_000909.1"/>
</dbReference>
<dbReference type="SMR" id="Q57875"/>
<dbReference type="STRING" id="243232.MJ_0433"/>
<dbReference type="PaxDb" id="243232-MJ_0433"/>
<dbReference type="EnsemblBacteria" id="AAB98433">
    <property type="protein sequence ID" value="AAB98433"/>
    <property type="gene ID" value="MJ_0433"/>
</dbReference>
<dbReference type="GeneID" id="1451293"/>
<dbReference type="KEGG" id="mja:MJ_0433"/>
<dbReference type="eggNOG" id="arCOG09667">
    <property type="taxonomic scope" value="Archaea"/>
</dbReference>
<dbReference type="HOGENOM" id="CLU_1458216_0_0_2"/>
<dbReference type="InParanoid" id="Q57875"/>
<dbReference type="OrthoDB" id="65912at2157"/>
<dbReference type="Proteomes" id="UP000000805">
    <property type="component" value="Chromosome"/>
</dbReference>